<evidence type="ECO:0000255" key="1">
    <source>
        <dbReference type="HAMAP-Rule" id="MF_00079"/>
    </source>
</evidence>
<sequence length="282" mass="29995">MRIAVPNKGRLHDPTLALLDRAGIGVEDGADRQLYADTVDPALTVLYARAADIPEYVADGAADAGITGHDQLRESDVDCVEERLDLNYGSCRLVLAAPEDGDVTAPADLDGATVATEFPTITRAYFADTTATPEIVEVTGATELTPHVEMADAIVDITSTGTTLRVNRLQVVDEVLSSSVRLFAHEDVHDDPKVQQVETALRSVLDAHGKRYVMLNAPADRLDDVKAVLPGLGGPTVLDVDEPGTVAVHAVVPERDVFEAISELKAVGASGILVTEIERLVD</sequence>
<dbReference type="EC" id="2.4.2.17" evidence="1"/>
<dbReference type="EMBL" id="AM774415">
    <property type="protein sequence ID" value="CAP14668.1"/>
    <property type="molecule type" value="Genomic_DNA"/>
</dbReference>
<dbReference type="RefSeq" id="WP_010903669.1">
    <property type="nucleotide sequence ID" value="NC_010364.1"/>
</dbReference>
<dbReference type="SMR" id="B0R7E9"/>
<dbReference type="EnsemblBacteria" id="CAP14668">
    <property type="protein sequence ID" value="CAP14668"/>
    <property type="gene ID" value="OE_4152R"/>
</dbReference>
<dbReference type="GeneID" id="68694799"/>
<dbReference type="KEGG" id="hsl:OE_4152R"/>
<dbReference type="HOGENOM" id="CLU_038115_1_0_2"/>
<dbReference type="PhylomeDB" id="B0R7E9"/>
<dbReference type="UniPathway" id="UPA00031">
    <property type="reaction ID" value="UER00006"/>
</dbReference>
<dbReference type="Proteomes" id="UP000001321">
    <property type="component" value="Chromosome"/>
</dbReference>
<dbReference type="GO" id="GO:0005737">
    <property type="term" value="C:cytoplasm"/>
    <property type="evidence" value="ECO:0007669"/>
    <property type="project" value="UniProtKB-SubCell"/>
</dbReference>
<dbReference type="GO" id="GO:0005524">
    <property type="term" value="F:ATP binding"/>
    <property type="evidence" value="ECO:0007669"/>
    <property type="project" value="UniProtKB-KW"/>
</dbReference>
<dbReference type="GO" id="GO:0003879">
    <property type="term" value="F:ATP phosphoribosyltransferase activity"/>
    <property type="evidence" value="ECO:0007669"/>
    <property type="project" value="UniProtKB-UniRule"/>
</dbReference>
<dbReference type="GO" id="GO:0000287">
    <property type="term" value="F:magnesium ion binding"/>
    <property type="evidence" value="ECO:0007669"/>
    <property type="project" value="UniProtKB-UniRule"/>
</dbReference>
<dbReference type="GO" id="GO:0000105">
    <property type="term" value="P:L-histidine biosynthetic process"/>
    <property type="evidence" value="ECO:0007669"/>
    <property type="project" value="UniProtKB-UniRule"/>
</dbReference>
<dbReference type="FunFam" id="3.30.70.120:FF:000002">
    <property type="entry name" value="ATP phosphoribosyltransferase"/>
    <property type="match status" value="1"/>
</dbReference>
<dbReference type="Gene3D" id="3.30.70.120">
    <property type="match status" value="1"/>
</dbReference>
<dbReference type="Gene3D" id="3.40.190.10">
    <property type="entry name" value="Periplasmic binding protein-like II"/>
    <property type="match status" value="2"/>
</dbReference>
<dbReference type="HAMAP" id="MF_00079">
    <property type="entry name" value="HisG_Long"/>
    <property type="match status" value="1"/>
</dbReference>
<dbReference type="InterPro" id="IPR020621">
    <property type="entry name" value="ATP-PRT_HisG_long"/>
</dbReference>
<dbReference type="InterPro" id="IPR013820">
    <property type="entry name" value="ATP_PRibTrfase_cat"/>
</dbReference>
<dbReference type="InterPro" id="IPR001348">
    <property type="entry name" value="ATP_PRibTrfase_HisG"/>
</dbReference>
<dbReference type="InterPro" id="IPR013115">
    <property type="entry name" value="HisG_C"/>
</dbReference>
<dbReference type="InterPro" id="IPR011322">
    <property type="entry name" value="N-reg_PII-like_a/b"/>
</dbReference>
<dbReference type="InterPro" id="IPR015867">
    <property type="entry name" value="N-reg_PII/ATP_PRibTrfase_C"/>
</dbReference>
<dbReference type="NCBIfam" id="TIGR00070">
    <property type="entry name" value="hisG"/>
    <property type="match status" value="1"/>
</dbReference>
<dbReference type="NCBIfam" id="TIGR03455">
    <property type="entry name" value="HisG_C-term"/>
    <property type="match status" value="1"/>
</dbReference>
<dbReference type="PANTHER" id="PTHR21403:SF10">
    <property type="entry name" value="ATP PHOSPHORIBOSYLTRANSFERASE"/>
    <property type="match status" value="1"/>
</dbReference>
<dbReference type="PANTHER" id="PTHR21403">
    <property type="entry name" value="ATP PHOSPHORIBOSYLTRANSFERASE ATP-PRTASE"/>
    <property type="match status" value="1"/>
</dbReference>
<dbReference type="Pfam" id="PF01634">
    <property type="entry name" value="HisG"/>
    <property type="match status" value="1"/>
</dbReference>
<dbReference type="Pfam" id="PF08029">
    <property type="entry name" value="HisG_C"/>
    <property type="match status" value="1"/>
</dbReference>
<dbReference type="SUPFAM" id="SSF54913">
    <property type="entry name" value="GlnB-like"/>
    <property type="match status" value="1"/>
</dbReference>
<dbReference type="SUPFAM" id="SSF53850">
    <property type="entry name" value="Periplasmic binding protein-like II"/>
    <property type="match status" value="1"/>
</dbReference>
<organism>
    <name type="scientific">Halobacterium salinarum (strain ATCC 29341 / DSM 671 / R1)</name>
    <dbReference type="NCBI Taxonomy" id="478009"/>
    <lineage>
        <taxon>Archaea</taxon>
        <taxon>Methanobacteriati</taxon>
        <taxon>Methanobacteriota</taxon>
        <taxon>Stenosarchaea group</taxon>
        <taxon>Halobacteria</taxon>
        <taxon>Halobacteriales</taxon>
        <taxon>Halobacteriaceae</taxon>
        <taxon>Halobacterium</taxon>
        <taxon>Halobacterium salinarum NRC-34001</taxon>
    </lineage>
</organism>
<gene>
    <name evidence="1" type="primary">hisG</name>
    <name type="ordered locus">OE_4152R</name>
</gene>
<feature type="chain" id="PRO_1000092734" description="ATP phosphoribosyltransferase">
    <location>
        <begin position="1"/>
        <end position="282"/>
    </location>
</feature>
<keyword id="KW-0028">Amino-acid biosynthesis</keyword>
<keyword id="KW-0067">ATP-binding</keyword>
<keyword id="KW-0963">Cytoplasm</keyword>
<keyword id="KW-0328">Glycosyltransferase</keyword>
<keyword id="KW-0368">Histidine biosynthesis</keyword>
<keyword id="KW-0460">Magnesium</keyword>
<keyword id="KW-0479">Metal-binding</keyword>
<keyword id="KW-0547">Nucleotide-binding</keyword>
<keyword id="KW-0808">Transferase</keyword>
<reference key="1">
    <citation type="journal article" date="2008" name="Genomics">
        <title>Evolution in the laboratory: the genome of Halobacterium salinarum strain R1 compared to that of strain NRC-1.</title>
        <authorList>
            <person name="Pfeiffer F."/>
            <person name="Schuster S.C."/>
            <person name="Broicher A."/>
            <person name="Falb M."/>
            <person name="Palm P."/>
            <person name="Rodewald K."/>
            <person name="Ruepp A."/>
            <person name="Soppa J."/>
            <person name="Tittor J."/>
            <person name="Oesterhelt D."/>
        </authorList>
    </citation>
    <scope>NUCLEOTIDE SEQUENCE [LARGE SCALE GENOMIC DNA]</scope>
    <source>
        <strain>ATCC 29341 / DSM 671 / R1</strain>
    </source>
</reference>
<accession>B0R7E9</accession>
<protein>
    <recommendedName>
        <fullName evidence="1">ATP phosphoribosyltransferase</fullName>
        <shortName evidence="1">ATP-PRT</shortName>
        <shortName evidence="1">ATP-PRTase</shortName>
        <ecNumber evidence="1">2.4.2.17</ecNumber>
    </recommendedName>
</protein>
<proteinExistence type="inferred from homology"/>
<name>HIS1_HALS3</name>
<comment type="function">
    <text evidence="1">Catalyzes the condensation of ATP and 5-phosphoribose 1-diphosphate to form N'-(5'-phosphoribosyl)-ATP (PR-ATP). Has a crucial role in the pathway because the rate of histidine biosynthesis seems to be controlled primarily by regulation of HisG enzymatic activity.</text>
</comment>
<comment type="catalytic activity">
    <reaction evidence="1">
        <text>1-(5-phospho-beta-D-ribosyl)-ATP + diphosphate = 5-phospho-alpha-D-ribose 1-diphosphate + ATP</text>
        <dbReference type="Rhea" id="RHEA:18473"/>
        <dbReference type="ChEBI" id="CHEBI:30616"/>
        <dbReference type="ChEBI" id="CHEBI:33019"/>
        <dbReference type="ChEBI" id="CHEBI:58017"/>
        <dbReference type="ChEBI" id="CHEBI:73183"/>
        <dbReference type="EC" id="2.4.2.17"/>
    </reaction>
</comment>
<comment type="cofactor">
    <cofactor evidence="1">
        <name>Mg(2+)</name>
        <dbReference type="ChEBI" id="CHEBI:18420"/>
    </cofactor>
</comment>
<comment type="activity regulation">
    <text evidence="1">Feedback inhibited by histidine.</text>
</comment>
<comment type="pathway">
    <text evidence="1">Amino-acid biosynthesis; L-histidine biosynthesis; L-histidine from 5-phospho-alpha-D-ribose 1-diphosphate: step 1/9.</text>
</comment>
<comment type="subcellular location">
    <subcellularLocation>
        <location evidence="1">Cytoplasm</location>
    </subcellularLocation>
</comment>
<comment type="similarity">
    <text evidence="1">Belongs to the ATP phosphoribosyltransferase family. Long subfamily.</text>
</comment>